<accession>A9NED8</accession>
<protein>
    <recommendedName>
        <fullName evidence="1">Large ribosomal subunit protein uL22</fullName>
    </recommendedName>
    <alternativeName>
        <fullName evidence="2">50S ribosomal protein L22</fullName>
    </alternativeName>
</protein>
<reference key="1">
    <citation type="journal article" date="2011" name="J. Bacteriol.">
        <title>Complete genome and proteome of Acholeplasma laidlawii.</title>
        <authorList>
            <person name="Lazarev V.N."/>
            <person name="Levitskii S.A."/>
            <person name="Basovskii Y.I."/>
            <person name="Chukin M.M."/>
            <person name="Akopian T.A."/>
            <person name="Vereshchagin V.V."/>
            <person name="Kostrjukova E.S."/>
            <person name="Kovaleva G.Y."/>
            <person name="Kazanov M.D."/>
            <person name="Malko D.B."/>
            <person name="Vitreschak A.G."/>
            <person name="Sernova N.V."/>
            <person name="Gelfand M.S."/>
            <person name="Demina I.A."/>
            <person name="Serebryakova M.V."/>
            <person name="Galyamina M.A."/>
            <person name="Vtyurin N.N."/>
            <person name="Rogov S.I."/>
            <person name="Alexeev D.G."/>
            <person name="Ladygina V.G."/>
            <person name="Govorun V.M."/>
        </authorList>
    </citation>
    <scope>NUCLEOTIDE SEQUENCE [LARGE SCALE GENOMIC DNA]</scope>
    <source>
        <strain>PG-8A</strain>
    </source>
</reference>
<feature type="chain" id="PRO_1000086544" description="Large ribosomal subunit protein uL22">
    <location>
        <begin position="1"/>
        <end position="111"/>
    </location>
</feature>
<evidence type="ECO:0000255" key="1">
    <source>
        <dbReference type="HAMAP-Rule" id="MF_01331"/>
    </source>
</evidence>
<evidence type="ECO:0000305" key="2"/>
<gene>
    <name evidence="1" type="primary">rplV</name>
    <name type="ordered locus">ACL_0092</name>
</gene>
<dbReference type="EMBL" id="CP000896">
    <property type="protein sequence ID" value="ABX80718.1"/>
    <property type="molecule type" value="Genomic_DNA"/>
</dbReference>
<dbReference type="RefSeq" id="WP_012242049.1">
    <property type="nucleotide sequence ID" value="NC_010163.1"/>
</dbReference>
<dbReference type="SMR" id="A9NED8"/>
<dbReference type="STRING" id="441768.ACL_0092"/>
<dbReference type="GeneID" id="41338294"/>
<dbReference type="KEGG" id="acl:ACL_0092"/>
<dbReference type="eggNOG" id="COG0091">
    <property type="taxonomic scope" value="Bacteria"/>
</dbReference>
<dbReference type="HOGENOM" id="CLU_083987_3_3_14"/>
<dbReference type="OrthoDB" id="9805969at2"/>
<dbReference type="Proteomes" id="UP000008558">
    <property type="component" value="Chromosome"/>
</dbReference>
<dbReference type="GO" id="GO:0022625">
    <property type="term" value="C:cytosolic large ribosomal subunit"/>
    <property type="evidence" value="ECO:0007669"/>
    <property type="project" value="TreeGrafter"/>
</dbReference>
<dbReference type="GO" id="GO:0019843">
    <property type="term" value="F:rRNA binding"/>
    <property type="evidence" value="ECO:0007669"/>
    <property type="project" value="UniProtKB-UniRule"/>
</dbReference>
<dbReference type="GO" id="GO:0003735">
    <property type="term" value="F:structural constituent of ribosome"/>
    <property type="evidence" value="ECO:0007669"/>
    <property type="project" value="InterPro"/>
</dbReference>
<dbReference type="GO" id="GO:0006412">
    <property type="term" value="P:translation"/>
    <property type="evidence" value="ECO:0007669"/>
    <property type="project" value="UniProtKB-UniRule"/>
</dbReference>
<dbReference type="CDD" id="cd00336">
    <property type="entry name" value="Ribosomal_L22"/>
    <property type="match status" value="1"/>
</dbReference>
<dbReference type="Gene3D" id="3.90.470.10">
    <property type="entry name" value="Ribosomal protein L22/L17"/>
    <property type="match status" value="1"/>
</dbReference>
<dbReference type="HAMAP" id="MF_01331_B">
    <property type="entry name" value="Ribosomal_uL22_B"/>
    <property type="match status" value="1"/>
</dbReference>
<dbReference type="InterPro" id="IPR001063">
    <property type="entry name" value="Ribosomal_uL22"/>
</dbReference>
<dbReference type="InterPro" id="IPR005727">
    <property type="entry name" value="Ribosomal_uL22_bac/chlpt-type"/>
</dbReference>
<dbReference type="InterPro" id="IPR047867">
    <property type="entry name" value="Ribosomal_uL22_bac/org-type"/>
</dbReference>
<dbReference type="InterPro" id="IPR018260">
    <property type="entry name" value="Ribosomal_uL22_CS"/>
</dbReference>
<dbReference type="InterPro" id="IPR036394">
    <property type="entry name" value="Ribosomal_uL22_sf"/>
</dbReference>
<dbReference type="NCBIfam" id="TIGR01044">
    <property type="entry name" value="rplV_bact"/>
    <property type="match status" value="1"/>
</dbReference>
<dbReference type="PANTHER" id="PTHR13501">
    <property type="entry name" value="CHLOROPLAST 50S RIBOSOMAL PROTEIN L22-RELATED"/>
    <property type="match status" value="1"/>
</dbReference>
<dbReference type="PANTHER" id="PTHR13501:SF8">
    <property type="entry name" value="LARGE RIBOSOMAL SUBUNIT PROTEIN UL22M"/>
    <property type="match status" value="1"/>
</dbReference>
<dbReference type="Pfam" id="PF00237">
    <property type="entry name" value="Ribosomal_L22"/>
    <property type="match status" value="1"/>
</dbReference>
<dbReference type="SUPFAM" id="SSF54843">
    <property type="entry name" value="Ribosomal protein L22"/>
    <property type="match status" value="1"/>
</dbReference>
<dbReference type="PROSITE" id="PS00464">
    <property type="entry name" value="RIBOSOMAL_L22"/>
    <property type="match status" value="1"/>
</dbReference>
<name>RL22_ACHLI</name>
<sequence length="111" mass="12317">MEAKAIGKTIRIAPRKVRLVVDLIRGKNVKEAQAILMFTPRGASPVIAKVLDSAIANATHNLNLNPENLFVKEVWANESITMKRMLPRAKGSGHLIRKRTSHITVVVAERE</sequence>
<organism>
    <name type="scientific">Acholeplasma laidlawii (strain PG-8A)</name>
    <dbReference type="NCBI Taxonomy" id="441768"/>
    <lineage>
        <taxon>Bacteria</taxon>
        <taxon>Bacillati</taxon>
        <taxon>Mycoplasmatota</taxon>
        <taxon>Mollicutes</taxon>
        <taxon>Acholeplasmatales</taxon>
        <taxon>Acholeplasmataceae</taxon>
        <taxon>Acholeplasma</taxon>
    </lineage>
</organism>
<comment type="function">
    <text evidence="1">This protein binds specifically to 23S rRNA; its binding is stimulated by other ribosomal proteins, e.g. L4, L17, and L20. It is important during the early stages of 50S assembly. It makes multiple contacts with different domains of the 23S rRNA in the assembled 50S subunit and ribosome (By similarity).</text>
</comment>
<comment type="function">
    <text evidence="1">The globular domain of the protein is located near the polypeptide exit tunnel on the outside of the subunit, while an extended beta-hairpin is found that lines the wall of the exit tunnel in the center of the 70S ribosome.</text>
</comment>
<comment type="subunit">
    <text evidence="1">Part of the 50S ribosomal subunit.</text>
</comment>
<comment type="similarity">
    <text evidence="1">Belongs to the universal ribosomal protein uL22 family.</text>
</comment>
<proteinExistence type="inferred from homology"/>
<keyword id="KW-1185">Reference proteome</keyword>
<keyword id="KW-0687">Ribonucleoprotein</keyword>
<keyword id="KW-0689">Ribosomal protein</keyword>
<keyword id="KW-0694">RNA-binding</keyword>
<keyword id="KW-0699">rRNA-binding</keyword>